<organism>
    <name type="scientific">Bartonella tribocorum (strain CIP 105476 / IBS 506)</name>
    <dbReference type="NCBI Taxonomy" id="382640"/>
    <lineage>
        <taxon>Bacteria</taxon>
        <taxon>Pseudomonadati</taxon>
        <taxon>Pseudomonadota</taxon>
        <taxon>Alphaproteobacteria</taxon>
        <taxon>Hyphomicrobiales</taxon>
        <taxon>Bartonellaceae</taxon>
        <taxon>Bartonella</taxon>
    </lineage>
</organism>
<proteinExistence type="inferred from homology"/>
<feature type="chain" id="PRO_1000076033" description="Large-conductance mechanosensitive channel">
    <location>
        <begin position="1"/>
        <end position="136"/>
    </location>
</feature>
<feature type="transmembrane region" description="Helical" evidence="1">
    <location>
        <begin position="15"/>
        <end position="35"/>
    </location>
</feature>
<feature type="transmembrane region" description="Helical" evidence="1">
    <location>
        <begin position="38"/>
        <end position="58"/>
    </location>
</feature>
<feature type="transmembrane region" description="Helical" evidence="1">
    <location>
        <begin position="80"/>
        <end position="100"/>
    </location>
</feature>
<keyword id="KW-0997">Cell inner membrane</keyword>
<keyword id="KW-1003">Cell membrane</keyword>
<keyword id="KW-0407">Ion channel</keyword>
<keyword id="KW-0406">Ion transport</keyword>
<keyword id="KW-0472">Membrane</keyword>
<keyword id="KW-0812">Transmembrane</keyword>
<keyword id="KW-1133">Transmembrane helix</keyword>
<keyword id="KW-0813">Transport</keyword>
<evidence type="ECO:0000255" key="1">
    <source>
        <dbReference type="HAMAP-Rule" id="MF_00115"/>
    </source>
</evidence>
<protein>
    <recommendedName>
        <fullName evidence="1">Large-conductance mechanosensitive channel</fullName>
    </recommendedName>
</protein>
<reference key="1">
    <citation type="journal article" date="2007" name="Nat. Genet.">
        <title>Genomic analysis of Bartonella identifies type IV secretion systems as host adaptability factors.</title>
        <authorList>
            <person name="Saenz H.L."/>
            <person name="Engel P."/>
            <person name="Stoeckli M.C."/>
            <person name="Lanz C."/>
            <person name="Raddatz G."/>
            <person name="Vayssier-Taussat M."/>
            <person name="Birtles R."/>
            <person name="Schuster S.C."/>
            <person name="Dehio C."/>
        </authorList>
    </citation>
    <scope>NUCLEOTIDE SEQUENCE [LARGE SCALE GENOMIC DNA]</scope>
    <source>
        <strain>CIP 105476 / IBS 506</strain>
    </source>
</reference>
<gene>
    <name evidence="1" type="primary">mscL</name>
    <name type="ordered locus">BT_0575</name>
</gene>
<accession>A9IQ78</accession>
<sequence length="136" mass="14980">MFKEFKEFALKGNMIDLAIGVIIGGAFGSLVNSIVNDIFMPIIGLITGGIDFSNMFIQLAGEKQATLSAAKAAGATISYGHFITLLINFLIIAWVLFFFVKAMNKMRRKEEGESPNKTSSEEQLLTEIRDLLAKKK</sequence>
<comment type="function">
    <text evidence="1">Channel that opens in response to stretch forces in the membrane lipid bilayer. May participate in the regulation of osmotic pressure changes within the cell.</text>
</comment>
<comment type="subunit">
    <text evidence="1">Homopentamer.</text>
</comment>
<comment type="subcellular location">
    <subcellularLocation>
        <location evidence="1">Cell inner membrane</location>
        <topology evidence="1">Multi-pass membrane protein</topology>
    </subcellularLocation>
</comment>
<comment type="similarity">
    <text evidence="1">Belongs to the MscL family.</text>
</comment>
<dbReference type="EMBL" id="AM260525">
    <property type="protein sequence ID" value="CAK01022.1"/>
    <property type="molecule type" value="Genomic_DNA"/>
</dbReference>
<dbReference type="RefSeq" id="WP_012231108.1">
    <property type="nucleotide sequence ID" value="NC_010161.1"/>
</dbReference>
<dbReference type="SMR" id="A9IQ78"/>
<dbReference type="KEGG" id="btr:BT_0575"/>
<dbReference type="eggNOG" id="COG1970">
    <property type="taxonomic scope" value="Bacteria"/>
</dbReference>
<dbReference type="HOGENOM" id="CLU_095787_0_1_5"/>
<dbReference type="Proteomes" id="UP000001592">
    <property type="component" value="Chromosome"/>
</dbReference>
<dbReference type="GO" id="GO:0005886">
    <property type="term" value="C:plasma membrane"/>
    <property type="evidence" value="ECO:0007669"/>
    <property type="project" value="UniProtKB-SubCell"/>
</dbReference>
<dbReference type="GO" id="GO:0008381">
    <property type="term" value="F:mechanosensitive monoatomic ion channel activity"/>
    <property type="evidence" value="ECO:0007669"/>
    <property type="project" value="UniProtKB-UniRule"/>
</dbReference>
<dbReference type="Gene3D" id="1.10.1200.120">
    <property type="entry name" value="Large-conductance mechanosensitive channel, MscL, domain 1"/>
    <property type="match status" value="1"/>
</dbReference>
<dbReference type="HAMAP" id="MF_00115">
    <property type="entry name" value="MscL"/>
    <property type="match status" value="1"/>
</dbReference>
<dbReference type="InterPro" id="IPR019823">
    <property type="entry name" value="Mechanosensitive_channel_CS"/>
</dbReference>
<dbReference type="InterPro" id="IPR001185">
    <property type="entry name" value="MS_channel"/>
</dbReference>
<dbReference type="InterPro" id="IPR037673">
    <property type="entry name" value="MSC/AndL"/>
</dbReference>
<dbReference type="InterPro" id="IPR036019">
    <property type="entry name" value="MscL_channel"/>
</dbReference>
<dbReference type="NCBIfam" id="TIGR00220">
    <property type="entry name" value="mscL"/>
    <property type="match status" value="1"/>
</dbReference>
<dbReference type="NCBIfam" id="NF001843">
    <property type="entry name" value="PRK00567.1-4"/>
    <property type="match status" value="1"/>
</dbReference>
<dbReference type="NCBIfam" id="NF010557">
    <property type="entry name" value="PRK13952.1"/>
    <property type="match status" value="1"/>
</dbReference>
<dbReference type="PANTHER" id="PTHR30266:SF2">
    <property type="entry name" value="LARGE-CONDUCTANCE MECHANOSENSITIVE CHANNEL"/>
    <property type="match status" value="1"/>
</dbReference>
<dbReference type="PANTHER" id="PTHR30266">
    <property type="entry name" value="MECHANOSENSITIVE CHANNEL MSCL"/>
    <property type="match status" value="1"/>
</dbReference>
<dbReference type="Pfam" id="PF01741">
    <property type="entry name" value="MscL"/>
    <property type="match status" value="1"/>
</dbReference>
<dbReference type="PRINTS" id="PR01264">
    <property type="entry name" value="MECHCHANNEL"/>
</dbReference>
<dbReference type="SUPFAM" id="SSF81330">
    <property type="entry name" value="Gated mechanosensitive channel"/>
    <property type="match status" value="1"/>
</dbReference>
<dbReference type="PROSITE" id="PS01327">
    <property type="entry name" value="MSCL"/>
    <property type="match status" value="1"/>
</dbReference>
<name>MSCL_BART1</name>